<organism>
    <name type="scientific">Rhizobium rhizogenes (strain K84 / ATCC BAA-868)</name>
    <name type="common">Agrobacterium radiobacter</name>
    <dbReference type="NCBI Taxonomy" id="311403"/>
    <lineage>
        <taxon>Bacteria</taxon>
        <taxon>Pseudomonadati</taxon>
        <taxon>Pseudomonadota</taxon>
        <taxon>Alphaproteobacteria</taxon>
        <taxon>Hyphomicrobiales</taxon>
        <taxon>Rhizobiaceae</taxon>
        <taxon>Rhizobium/Agrobacterium group</taxon>
        <taxon>Rhizobium</taxon>
    </lineage>
</organism>
<comment type="function">
    <text evidence="1">One of the early assembly proteins it binds 23S rRNA. One of the proteins that surrounds the polypeptide exit tunnel on the outside of the ribosome. Forms the main docking site for trigger factor binding to the ribosome.</text>
</comment>
<comment type="subunit">
    <text evidence="1">Part of the 50S ribosomal subunit. Contacts protein L29, and trigger factor when it is bound to the ribosome.</text>
</comment>
<comment type="similarity">
    <text evidence="1">Belongs to the universal ribosomal protein uL23 family.</text>
</comment>
<protein>
    <recommendedName>
        <fullName evidence="1">Large ribosomal subunit protein uL23</fullName>
    </recommendedName>
    <alternativeName>
        <fullName evidence="2">50S ribosomal protein L23</fullName>
    </alternativeName>
</protein>
<reference key="1">
    <citation type="journal article" date="2009" name="J. Bacteriol.">
        <title>Genome sequences of three Agrobacterium biovars help elucidate the evolution of multichromosome genomes in bacteria.</title>
        <authorList>
            <person name="Slater S.C."/>
            <person name="Goldman B.S."/>
            <person name="Goodner B."/>
            <person name="Setubal J.C."/>
            <person name="Farrand S.K."/>
            <person name="Nester E.W."/>
            <person name="Burr T.J."/>
            <person name="Banta L."/>
            <person name="Dickerman A.W."/>
            <person name="Paulsen I."/>
            <person name="Otten L."/>
            <person name="Suen G."/>
            <person name="Welch R."/>
            <person name="Almeida N.F."/>
            <person name="Arnold F."/>
            <person name="Burton O.T."/>
            <person name="Du Z."/>
            <person name="Ewing A."/>
            <person name="Godsy E."/>
            <person name="Heisel S."/>
            <person name="Houmiel K.L."/>
            <person name="Jhaveri J."/>
            <person name="Lu J."/>
            <person name="Miller N.M."/>
            <person name="Norton S."/>
            <person name="Chen Q."/>
            <person name="Phoolcharoen W."/>
            <person name="Ohlin V."/>
            <person name="Ondrusek D."/>
            <person name="Pride N."/>
            <person name="Stricklin S.L."/>
            <person name="Sun J."/>
            <person name="Wheeler C."/>
            <person name="Wilson L."/>
            <person name="Zhu H."/>
            <person name="Wood D.W."/>
        </authorList>
    </citation>
    <scope>NUCLEOTIDE SEQUENCE [LARGE SCALE GENOMIC DNA]</scope>
    <source>
        <strain>K84 / ATCC BAA-868</strain>
    </source>
</reference>
<evidence type="ECO:0000255" key="1">
    <source>
        <dbReference type="HAMAP-Rule" id="MF_01369"/>
    </source>
</evidence>
<evidence type="ECO:0000305" key="2"/>
<accession>B9JDT0</accession>
<feature type="chain" id="PRO_1000184057" description="Large ribosomal subunit protein uL23">
    <location>
        <begin position="1"/>
        <end position="97"/>
    </location>
</feature>
<gene>
    <name evidence="1" type="primary">rplW</name>
    <name type="ordered locus">Arad_1974</name>
</gene>
<sequence length="97" mass="10439">MTDLRHYDVIVSPAITEKSTLLSDNNQVVFNVAKTATKPEIKAAVEALFGVKVTAVNTLLRLGKTKRFKGLVGKQKDVKKAIVTLAEGQSIDVSTGL</sequence>
<dbReference type="EMBL" id="CP000628">
    <property type="protein sequence ID" value="ACM26281.1"/>
    <property type="molecule type" value="Genomic_DNA"/>
</dbReference>
<dbReference type="RefSeq" id="WP_007690755.1">
    <property type="nucleotide sequence ID" value="NC_011985.1"/>
</dbReference>
<dbReference type="SMR" id="B9JDT0"/>
<dbReference type="STRING" id="311403.Arad_1974"/>
<dbReference type="KEGG" id="ara:Arad_1974"/>
<dbReference type="eggNOG" id="COG0089">
    <property type="taxonomic scope" value="Bacteria"/>
</dbReference>
<dbReference type="HOGENOM" id="CLU_037562_3_1_5"/>
<dbReference type="Proteomes" id="UP000001600">
    <property type="component" value="Chromosome 1"/>
</dbReference>
<dbReference type="GO" id="GO:1990904">
    <property type="term" value="C:ribonucleoprotein complex"/>
    <property type="evidence" value="ECO:0007669"/>
    <property type="project" value="UniProtKB-KW"/>
</dbReference>
<dbReference type="GO" id="GO:0005840">
    <property type="term" value="C:ribosome"/>
    <property type="evidence" value="ECO:0007669"/>
    <property type="project" value="UniProtKB-KW"/>
</dbReference>
<dbReference type="GO" id="GO:0019843">
    <property type="term" value="F:rRNA binding"/>
    <property type="evidence" value="ECO:0007669"/>
    <property type="project" value="UniProtKB-UniRule"/>
</dbReference>
<dbReference type="GO" id="GO:0003735">
    <property type="term" value="F:structural constituent of ribosome"/>
    <property type="evidence" value="ECO:0007669"/>
    <property type="project" value="InterPro"/>
</dbReference>
<dbReference type="GO" id="GO:0006412">
    <property type="term" value="P:translation"/>
    <property type="evidence" value="ECO:0007669"/>
    <property type="project" value="UniProtKB-UniRule"/>
</dbReference>
<dbReference type="FunFam" id="3.30.70.330:FF:000001">
    <property type="entry name" value="50S ribosomal protein L23"/>
    <property type="match status" value="1"/>
</dbReference>
<dbReference type="Gene3D" id="3.30.70.330">
    <property type="match status" value="1"/>
</dbReference>
<dbReference type="HAMAP" id="MF_01369_B">
    <property type="entry name" value="Ribosomal_uL23_B"/>
    <property type="match status" value="1"/>
</dbReference>
<dbReference type="InterPro" id="IPR012677">
    <property type="entry name" value="Nucleotide-bd_a/b_plait_sf"/>
</dbReference>
<dbReference type="InterPro" id="IPR013025">
    <property type="entry name" value="Ribosomal_uL23-like"/>
</dbReference>
<dbReference type="InterPro" id="IPR012678">
    <property type="entry name" value="Ribosomal_uL23/eL15/eS24_sf"/>
</dbReference>
<dbReference type="NCBIfam" id="NF004359">
    <property type="entry name" value="PRK05738.1-3"/>
    <property type="match status" value="1"/>
</dbReference>
<dbReference type="NCBIfam" id="NF004360">
    <property type="entry name" value="PRK05738.1-5"/>
    <property type="match status" value="1"/>
</dbReference>
<dbReference type="NCBIfam" id="NF004363">
    <property type="entry name" value="PRK05738.2-4"/>
    <property type="match status" value="1"/>
</dbReference>
<dbReference type="PANTHER" id="PTHR11620">
    <property type="entry name" value="60S RIBOSOMAL PROTEIN L23A"/>
    <property type="match status" value="1"/>
</dbReference>
<dbReference type="Pfam" id="PF00276">
    <property type="entry name" value="Ribosomal_L23"/>
    <property type="match status" value="1"/>
</dbReference>
<dbReference type="SUPFAM" id="SSF54189">
    <property type="entry name" value="Ribosomal proteins S24e, L23 and L15e"/>
    <property type="match status" value="1"/>
</dbReference>
<proteinExistence type="inferred from homology"/>
<name>RL23_RHIR8</name>
<keyword id="KW-0687">Ribonucleoprotein</keyword>
<keyword id="KW-0689">Ribosomal protein</keyword>
<keyword id="KW-0694">RNA-binding</keyword>
<keyword id="KW-0699">rRNA-binding</keyword>